<keyword id="KW-0378">Hydrolase</keyword>
<sequence>MNVLEQQLNHLVDECRPYTAQGKVADYIPELAHVKNDLLGVAICLPDGTYIHAGDVHHKFTIQSVSKALTLCYVLMEFGEDYVFSKVGMEPTGDAFNSIAKLEETVPSKPLNPMINAGALAVTSMILGETAELKIYQFRQFLATLLNRSVEEVTYDEKVARSEYETTDLNRALLYFMRHHGIVEGDVDEIIDVYTKQCAIEIDCFDLARIGRVFAGNGEDPDTGEELIPRRVVRIVKAIMTTCGMYDASGEFAVRVGLPGKSGVSGAILAVGNHELDLNNVGFGIFGPALDSKGNSIAGMKLLELLIERYTSR</sequence>
<name>GLSA_EXISA</name>
<accession>C4L2C1</accession>
<feature type="chain" id="PRO_1000205062" description="Glutaminase">
    <location>
        <begin position="1"/>
        <end position="313"/>
    </location>
</feature>
<feature type="binding site" evidence="1">
    <location>
        <position position="64"/>
    </location>
    <ligand>
        <name>substrate</name>
    </ligand>
</feature>
<feature type="binding site" evidence="1">
    <location>
        <position position="116"/>
    </location>
    <ligand>
        <name>substrate</name>
    </ligand>
</feature>
<feature type="binding site" evidence="1">
    <location>
        <position position="163"/>
    </location>
    <ligand>
        <name>substrate</name>
    </ligand>
</feature>
<feature type="binding site" evidence="1">
    <location>
        <position position="170"/>
    </location>
    <ligand>
        <name>substrate</name>
    </ligand>
</feature>
<feature type="binding site" evidence="1">
    <location>
        <position position="194"/>
    </location>
    <ligand>
        <name>substrate</name>
    </ligand>
</feature>
<feature type="binding site" evidence="1">
    <location>
        <position position="246"/>
    </location>
    <ligand>
        <name>substrate</name>
    </ligand>
</feature>
<feature type="binding site" evidence="1">
    <location>
        <position position="264"/>
    </location>
    <ligand>
        <name>substrate</name>
    </ligand>
</feature>
<dbReference type="EC" id="3.5.1.2" evidence="1"/>
<dbReference type="EMBL" id="CP001615">
    <property type="protein sequence ID" value="ACQ71173.1"/>
    <property type="molecule type" value="Genomic_DNA"/>
</dbReference>
<dbReference type="RefSeq" id="WP_015880732.1">
    <property type="nucleotide sequence ID" value="NC_012673.1"/>
</dbReference>
<dbReference type="SMR" id="C4L2C1"/>
<dbReference type="STRING" id="360911.EAT1b_2251"/>
<dbReference type="GeneID" id="94373109"/>
<dbReference type="KEGG" id="eat:EAT1b_2251"/>
<dbReference type="eggNOG" id="COG2066">
    <property type="taxonomic scope" value="Bacteria"/>
</dbReference>
<dbReference type="HOGENOM" id="CLU_027932_1_1_9"/>
<dbReference type="OrthoDB" id="9788822at2"/>
<dbReference type="Proteomes" id="UP000000716">
    <property type="component" value="Chromosome"/>
</dbReference>
<dbReference type="GO" id="GO:0004359">
    <property type="term" value="F:glutaminase activity"/>
    <property type="evidence" value="ECO:0007669"/>
    <property type="project" value="UniProtKB-UniRule"/>
</dbReference>
<dbReference type="GO" id="GO:0006537">
    <property type="term" value="P:glutamate biosynthetic process"/>
    <property type="evidence" value="ECO:0007669"/>
    <property type="project" value="TreeGrafter"/>
</dbReference>
<dbReference type="GO" id="GO:0006543">
    <property type="term" value="P:glutamine catabolic process"/>
    <property type="evidence" value="ECO:0007669"/>
    <property type="project" value="TreeGrafter"/>
</dbReference>
<dbReference type="FunFam" id="3.40.710.10:FF:000005">
    <property type="entry name" value="Glutaminase"/>
    <property type="match status" value="1"/>
</dbReference>
<dbReference type="Gene3D" id="3.40.710.10">
    <property type="entry name" value="DD-peptidase/beta-lactamase superfamily"/>
    <property type="match status" value="1"/>
</dbReference>
<dbReference type="HAMAP" id="MF_00313">
    <property type="entry name" value="Glutaminase"/>
    <property type="match status" value="1"/>
</dbReference>
<dbReference type="InterPro" id="IPR012338">
    <property type="entry name" value="Beta-lactam/transpept-like"/>
</dbReference>
<dbReference type="InterPro" id="IPR015868">
    <property type="entry name" value="Glutaminase"/>
</dbReference>
<dbReference type="NCBIfam" id="TIGR03814">
    <property type="entry name" value="Gln_ase"/>
    <property type="match status" value="1"/>
</dbReference>
<dbReference type="PANTHER" id="PTHR12544">
    <property type="entry name" value="GLUTAMINASE"/>
    <property type="match status" value="1"/>
</dbReference>
<dbReference type="PANTHER" id="PTHR12544:SF29">
    <property type="entry name" value="GLUTAMINASE"/>
    <property type="match status" value="1"/>
</dbReference>
<dbReference type="Pfam" id="PF04960">
    <property type="entry name" value="Glutaminase"/>
    <property type="match status" value="1"/>
</dbReference>
<dbReference type="SUPFAM" id="SSF56601">
    <property type="entry name" value="beta-lactamase/transpeptidase-like"/>
    <property type="match status" value="1"/>
</dbReference>
<protein>
    <recommendedName>
        <fullName evidence="1">Glutaminase</fullName>
        <ecNumber evidence="1">3.5.1.2</ecNumber>
    </recommendedName>
</protein>
<evidence type="ECO:0000255" key="1">
    <source>
        <dbReference type="HAMAP-Rule" id="MF_00313"/>
    </source>
</evidence>
<organism>
    <name type="scientific">Exiguobacterium sp. (strain ATCC BAA-1283 / AT1b)</name>
    <dbReference type="NCBI Taxonomy" id="360911"/>
    <lineage>
        <taxon>Bacteria</taxon>
        <taxon>Bacillati</taxon>
        <taxon>Bacillota</taxon>
        <taxon>Bacilli</taxon>
        <taxon>Bacillales</taxon>
        <taxon>Bacillales Family XII. Incertae Sedis</taxon>
        <taxon>Exiguobacterium</taxon>
    </lineage>
</organism>
<comment type="catalytic activity">
    <reaction evidence="1">
        <text>L-glutamine + H2O = L-glutamate + NH4(+)</text>
        <dbReference type="Rhea" id="RHEA:15889"/>
        <dbReference type="ChEBI" id="CHEBI:15377"/>
        <dbReference type="ChEBI" id="CHEBI:28938"/>
        <dbReference type="ChEBI" id="CHEBI:29985"/>
        <dbReference type="ChEBI" id="CHEBI:58359"/>
        <dbReference type="EC" id="3.5.1.2"/>
    </reaction>
</comment>
<comment type="subunit">
    <text evidence="1">Homotetramer.</text>
</comment>
<comment type="similarity">
    <text evidence="1">Belongs to the glutaminase family.</text>
</comment>
<reference key="1">
    <citation type="journal article" date="2011" name="J. Bacteriol.">
        <title>Complete genome sequence of the Thermophilic Bacterium Exiguobacterium sp. AT1b.</title>
        <authorList>
            <person name="Vishnivetskaya T.A."/>
            <person name="Lucas S."/>
            <person name="Copeland A."/>
            <person name="Lapidus A."/>
            <person name="Glavina del Rio T."/>
            <person name="Dalin E."/>
            <person name="Tice H."/>
            <person name="Bruce D.C."/>
            <person name="Goodwin L.A."/>
            <person name="Pitluck S."/>
            <person name="Saunders E."/>
            <person name="Brettin T."/>
            <person name="Detter C."/>
            <person name="Han C."/>
            <person name="Larimer F."/>
            <person name="Land M.L."/>
            <person name="Hauser L.J."/>
            <person name="Kyrpides N.C."/>
            <person name="Ovchinnikova G."/>
            <person name="Kathariou S."/>
            <person name="Ramaley R.F."/>
            <person name="Rodrigues D.F."/>
            <person name="Hendrix C."/>
            <person name="Richardson P."/>
            <person name="Tiedje J.M."/>
        </authorList>
    </citation>
    <scope>NUCLEOTIDE SEQUENCE [LARGE SCALE GENOMIC DNA]</scope>
    <source>
        <strain>ATCC BAA-1283 / AT1b</strain>
    </source>
</reference>
<proteinExistence type="inferred from homology"/>
<gene>
    <name evidence="1" type="primary">glsA</name>
    <name type="ordered locus">EAT1b_2251</name>
</gene>